<accession>P81155</accession>
<accession>Q9JI32</accession>
<protein>
    <recommendedName>
        <fullName evidence="8">Non-selective voltage-gated ion channel VDAC2</fullName>
        <shortName>VDAC-2</shortName>
    </recommendedName>
    <alternativeName>
        <fullName>B36-VDAC</fullName>
    </alternativeName>
    <alternativeName>
        <fullName>Outer mitochondrial membrane protein porin 2</fullName>
    </alternativeName>
</protein>
<organism>
    <name type="scientific">Rattus norvegicus</name>
    <name type="common">Rat</name>
    <dbReference type="NCBI Taxonomy" id="10116"/>
    <lineage>
        <taxon>Eukaryota</taxon>
        <taxon>Metazoa</taxon>
        <taxon>Chordata</taxon>
        <taxon>Craniata</taxon>
        <taxon>Vertebrata</taxon>
        <taxon>Euteleostomi</taxon>
        <taxon>Mammalia</taxon>
        <taxon>Eutheria</taxon>
        <taxon>Euarchontoglires</taxon>
        <taxon>Glires</taxon>
        <taxon>Rodentia</taxon>
        <taxon>Myomorpha</taxon>
        <taxon>Muroidea</taxon>
        <taxon>Muridae</taxon>
        <taxon>Murinae</taxon>
        <taxon>Rattus</taxon>
    </lineage>
</organism>
<dbReference type="EMBL" id="AB039663">
    <property type="protein sequence ID" value="BAB13474.1"/>
    <property type="molecule type" value="mRNA"/>
</dbReference>
<dbReference type="EMBL" id="AF268468">
    <property type="protein sequence ID" value="AAF80116.1"/>
    <property type="molecule type" value="mRNA"/>
</dbReference>
<dbReference type="EMBL" id="BC063164">
    <property type="protein sequence ID" value="AAH63164.1"/>
    <property type="molecule type" value="mRNA"/>
</dbReference>
<dbReference type="PIR" id="A38102">
    <property type="entry name" value="A38102"/>
</dbReference>
<dbReference type="RefSeq" id="NP_112644.1">
    <property type="nucleotide sequence ID" value="NM_031354.1"/>
</dbReference>
<dbReference type="RefSeq" id="XP_006251723.1">
    <property type="nucleotide sequence ID" value="XM_006251661.4"/>
</dbReference>
<dbReference type="SMR" id="P81155"/>
<dbReference type="BioGRID" id="249747">
    <property type="interactions" value="6"/>
</dbReference>
<dbReference type="FunCoup" id="P81155">
    <property type="interactions" value="3166"/>
</dbReference>
<dbReference type="IntAct" id="P81155">
    <property type="interactions" value="6"/>
</dbReference>
<dbReference type="MINT" id="P81155"/>
<dbReference type="STRING" id="10116.ENSRNOP00000018462"/>
<dbReference type="CarbonylDB" id="P81155"/>
<dbReference type="GlyGen" id="P81155">
    <property type="glycosylation" value="1 site, 1 O-linked glycan (1 site)"/>
</dbReference>
<dbReference type="iPTMnet" id="P81155"/>
<dbReference type="PhosphoSitePlus" id="P81155"/>
<dbReference type="SwissPalm" id="P81155"/>
<dbReference type="jPOST" id="P81155"/>
<dbReference type="PaxDb" id="10116-ENSRNOP00000018462"/>
<dbReference type="GeneID" id="83531"/>
<dbReference type="KEGG" id="rno:83531"/>
<dbReference type="UCSC" id="RGD:621576">
    <property type="organism name" value="rat"/>
</dbReference>
<dbReference type="AGR" id="RGD:621576"/>
<dbReference type="CTD" id="7417"/>
<dbReference type="RGD" id="621576">
    <property type="gene designation" value="Vdac2"/>
</dbReference>
<dbReference type="VEuPathDB" id="HostDB:ENSRNOG00000013505"/>
<dbReference type="eggNOG" id="KOG3126">
    <property type="taxonomic scope" value="Eukaryota"/>
</dbReference>
<dbReference type="HOGENOM" id="CLU_044399_2_0_1"/>
<dbReference type="InParanoid" id="P81155"/>
<dbReference type="OrthoDB" id="1925at9989"/>
<dbReference type="PhylomeDB" id="P81155"/>
<dbReference type="Reactome" id="R-RNO-5205685">
    <property type="pathway name" value="PINK1-PRKN Mediated Mitophagy"/>
</dbReference>
<dbReference type="Reactome" id="R-RNO-5689880">
    <property type="pathway name" value="Ub-specific processing proteases"/>
</dbReference>
<dbReference type="PRO" id="PR:P81155"/>
<dbReference type="Proteomes" id="UP000002494">
    <property type="component" value="Chromosome 15"/>
</dbReference>
<dbReference type="Bgee" id="ENSRNOG00000013505">
    <property type="expression patterns" value="Expressed in heart and 20 other cell types or tissues"/>
</dbReference>
<dbReference type="GO" id="GO:0001669">
    <property type="term" value="C:acrosomal vesicle"/>
    <property type="evidence" value="ECO:0000266"/>
    <property type="project" value="RGD"/>
</dbReference>
<dbReference type="GO" id="GO:0016020">
    <property type="term" value="C:membrane"/>
    <property type="evidence" value="ECO:0000250"/>
    <property type="project" value="UniProtKB"/>
</dbReference>
<dbReference type="GO" id="GO:0031966">
    <property type="term" value="C:mitochondrial membrane"/>
    <property type="evidence" value="ECO:0000266"/>
    <property type="project" value="RGD"/>
</dbReference>
<dbReference type="GO" id="GO:0042645">
    <property type="term" value="C:mitochondrial nucleoid"/>
    <property type="evidence" value="ECO:0000266"/>
    <property type="project" value="RGD"/>
</dbReference>
<dbReference type="GO" id="GO:0005741">
    <property type="term" value="C:mitochondrial outer membrane"/>
    <property type="evidence" value="ECO:0000250"/>
    <property type="project" value="UniProtKB"/>
</dbReference>
<dbReference type="GO" id="GO:0005739">
    <property type="term" value="C:mitochondrion"/>
    <property type="evidence" value="ECO:0000266"/>
    <property type="project" value="RGD"/>
</dbReference>
<dbReference type="GO" id="GO:0046930">
    <property type="term" value="C:pore complex"/>
    <property type="evidence" value="ECO:0007669"/>
    <property type="project" value="UniProtKB-KW"/>
</dbReference>
<dbReference type="GO" id="GO:0097225">
    <property type="term" value="C:sperm midpiece"/>
    <property type="evidence" value="ECO:0000250"/>
    <property type="project" value="UniProtKB"/>
</dbReference>
<dbReference type="GO" id="GO:0008021">
    <property type="term" value="C:synaptic vesicle"/>
    <property type="evidence" value="ECO:0000314"/>
    <property type="project" value="RGD"/>
</dbReference>
<dbReference type="GO" id="GO:0005524">
    <property type="term" value="F:ATP binding"/>
    <property type="evidence" value="ECO:0007669"/>
    <property type="project" value="UniProtKB-KW"/>
</dbReference>
<dbReference type="GO" id="GO:0097001">
    <property type="term" value="F:ceramide binding"/>
    <property type="evidence" value="ECO:0000250"/>
    <property type="project" value="UniProtKB"/>
</dbReference>
<dbReference type="GO" id="GO:0015485">
    <property type="term" value="F:cholesterol binding"/>
    <property type="evidence" value="ECO:0000250"/>
    <property type="project" value="UniProtKB"/>
</dbReference>
<dbReference type="GO" id="GO:0008142">
    <property type="term" value="F:oxysterol binding"/>
    <property type="evidence" value="ECO:0000250"/>
    <property type="project" value="UniProtKB"/>
</dbReference>
<dbReference type="GO" id="GO:0031210">
    <property type="term" value="F:phosphatidylcholine binding"/>
    <property type="evidence" value="ECO:0000250"/>
    <property type="project" value="UniProtKB"/>
</dbReference>
<dbReference type="GO" id="GO:0017128">
    <property type="term" value="F:phospholipid scramblase activity"/>
    <property type="evidence" value="ECO:0000266"/>
    <property type="project" value="RGD"/>
</dbReference>
<dbReference type="GO" id="GO:0015288">
    <property type="term" value="F:porin activity"/>
    <property type="evidence" value="ECO:0007669"/>
    <property type="project" value="UniProtKB-KW"/>
</dbReference>
<dbReference type="GO" id="GO:0008308">
    <property type="term" value="F:voltage-gated monoatomic anion channel activity"/>
    <property type="evidence" value="ECO:0000266"/>
    <property type="project" value="RGD"/>
</dbReference>
<dbReference type="GO" id="GO:0005244">
    <property type="term" value="F:voltage-gated monoatomic ion channel activity"/>
    <property type="evidence" value="ECO:0000250"/>
    <property type="project" value="UniProtKB"/>
</dbReference>
<dbReference type="GO" id="GO:0007339">
    <property type="term" value="P:binding of sperm to zona pellucida"/>
    <property type="evidence" value="ECO:0000266"/>
    <property type="project" value="RGD"/>
</dbReference>
<dbReference type="GO" id="GO:0097345">
    <property type="term" value="P:mitochondrial outer membrane permeabilization"/>
    <property type="evidence" value="ECO:0000250"/>
    <property type="project" value="UniProtKB"/>
</dbReference>
<dbReference type="GO" id="GO:1990542">
    <property type="term" value="P:mitochondrial transmembrane transport"/>
    <property type="evidence" value="ECO:0000266"/>
    <property type="project" value="RGD"/>
</dbReference>
<dbReference type="GO" id="GO:0006820">
    <property type="term" value="P:monoatomic anion transport"/>
    <property type="evidence" value="ECO:0000250"/>
    <property type="project" value="UniProtKB"/>
</dbReference>
<dbReference type="GO" id="GO:2001243">
    <property type="term" value="P:negative regulation of intrinsic apoptotic signaling pathway"/>
    <property type="evidence" value="ECO:0000266"/>
    <property type="project" value="RGD"/>
</dbReference>
<dbReference type="GO" id="GO:0032272">
    <property type="term" value="P:negative regulation of protein polymerization"/>
    <property type="evidence" value="ECO:0000266"/>
    <property type="project" value="RGD"/>
</dbReference>
<dbReference type="GO" id="GO:0045332">
    <property type="term" value="P:phospholipid translocation"/>
    <property type="evidence" value="ECO:0000266"/>
    <property type="project" value="RGD"/>
</dbReference>
<dbReference type="CDD" id="cd07306">
    <property type="entry name" value="Porin3_VDAC"/>
    <property type="match status" value="1"/>
</dbReference>
<dbReference type="FunFam" id="2.40.160.10:FF:000001">
    <property type="entry name" value="Voltage-dependent anion-selective channel protein 2"/>
    <property type="match status" value="1"/>
</dbReference>
<dbReference type="Gene3D" id="2.40.160.10">
    <property type="entry name" value="Porin"/>
    <property type="match status" value="1"/>
</dbReference>
<dbReference type="InterPro" id="IPR023614">
    <property type="entry name" value="Porin_dom_sf"/>
</dbReference>
<dbReference type="InterPro" id="IPR001925">
    <property type="entry name" value="Porin_Euk"/>
</dbReference>
<dbReference type="InterPro" id="IPR027246">
    <property type="entry name" value="Porin_Euk/Tom40"/>
</dbReference>
<dbReference type="PANTHER" id="PTHR11743">
    <property type="entry name" value="VOLTAGE-DEPENDENT ANION-SELECTIVE CHANNEL"/>
    <property type="match status" value="1"/>
</dbReference>
<dbReference type="PANTHER" id="PTHR11743:SF12">
    <property type="entry name" value="VOLTAGE-DEPENDENT ANION-SELECTIVE CHANNEL PROTEIN 2"/>
    <property type="match status" value="1"/>
</dbReference>
<dbReference type="Pfam" id="PF01459">
    <property type="entry name" value="Porin_3"/>
    <property type="match status" value="1"/>
</dbReference>
<dbReference type="PRINTS" id="PR00185">
    <property type="entry name" value="EUKARYTPORIN"/>
</dbReference>
<dbReference type="PROSITE" id="PS00558">
    <property type="entry name" value="EUKARYOTIC_PORIN"/>
    <property type="match status" value="1"/>
</dbReference>
<name>VDAC2_RAT</name>
<keyword id="KW-0007">Acetylation</keyword>
<keyword id="KW-0067">ATP-binding</keyword>
<keyword id="KW-0903">Direct protein sequencing</keyword>
<keyword id="KW-0406">Ion transport</keyword>
<keyword id="KW-1017">Isopeptide bond</keyword>
<keyword id="KW-0445">Lipid transport</keyword>
<keyword id="KW-0446">Lipid-binding</keyword>
<keyword id="KW-0472">Membrane</keyword>
<keyword id="KW-0496">Mitochondrion</keyword>
<keyword id="KW-1000">Mitochondrion outer membrane</keyword>
<keyword id="KW-0520">NAD</keyword>
<keyword id="KW-0547">Nucleotide-binding</keyword>
<keyword id="KW-0597">Phosphoprotein</keyword>
<keyword id="KW-0626">Porin</keyword>
<keyword id="KW-1185">Reference proteome</keyword>
<keyword id="KW-0812">Transmembrane</keyword>
<keyword id="KW-1134">Transmembrane beta strand</keyword>
<keyword id="KW-0813">Transport</keyword>
<keyword id="KW-0832">Ubl conjugation</keyword>
<evidence type="ECO:0000250" key="1">
    <source>
        <dbReference type="UniProtKB" id="P21796"/>
    </source>
</evidence>
<evidence type="ECO:0000250" key="2">
    <source>
        <dbReference type="UniProtKB" id="P45880"/>
    </source>
</evidence>
<evidence type="ECO:0000250" key="3">
    <source>
        <dbReference type="UniProtKB" id="Q60930"/>
    </source>
</evidence>
<evidence type="ECO:0000250" key="4">
    <source>
        <dbReference type="UniProtKB" id="Q60932"/>
    </source>
</evidence>
<evidence type="ECO:0000269" key="5">
    <source>
    </source>
</evidence>
<evidence type="ECO:0000269" key="6">
    <source>
    </source>
</evidence>
<evidence type="ECO:0000269" key="7">
    <source>
    </source>
</evidence>
<evidence type="ECO:0000305" key="8"/>
<evidence type="ECO:0000312" key="9">
    <source>
        <dbReference type="RGD" id="621576"/>
    </source>
</evidence>
<sequence>MAECCVPVCQRPICIPPPYADLGKAARDIFNKGFGFGLVKLDVKTKSCSGVEFSTSGSSNTDTGKVSGTLETKYKWCEYGLTFTEKWNTDNTLGTEIAIEDQICQGLKLTFDTTFSPNTGKKSGKIKSAYKRECINLGCDVDFDFAGPAIHGSAVFGYEGWLAGYQMTFDSAKSKLTRSNFAVGYRTGDFQLHTNVNNGTEFGGSIYQKVCEDFDTSVNLAWTSGTNCTRFGIAAKYQLDPTASISAKVNNSSLIGVGYTQTLRPGVKLTLSALVDGKSFNAGGHKLGLALELEA</sequence>
<comment type="function">
    <text evidence="2 3">Non-selective voltage-gated ion channel that mediates the transport of anions and cations through the mitochondrion outer membrane and plasma membrane (By similarity). The channel adopts an open conformation at zero mV and a closed conformation at both positive and negative potentials (By similarity). There are two populations of channels; the main that functions in a lower open-state conductance with lower ion selectivity, that switch, in a voltage-dependent manner, from the open to a low-conducting 'closed' state and the other that has a normal ion selectivity in the typical high conductance, 'open' state (By similarity). Binds various lipids, including the sphingolipid ceramide, the phospholipid phosphatidylcholine, and the sterols cholesterol and oxysterol (By similarity). Binding of ceramide promotes the mitochondrial outer membrane permeabilization (MOMP) apoptotic pathway (By similarity).</text>
</comment>
<comment type="function">
    <text evidence="2">Catalyzes the scrambling of phospholipids across the outer mitochondrial membrane; the mechanism is unrelated to channel activity and is capable of translocating both anionic and zwitterionic phospholipids.</text>
</comment>
<comment type="catalytic activity">
    <reaction evidence="3">
        <text>chloride(in) = chloride(out)</text>
        <dbReference type="Rhea" id="RHEA:29823"/>
        <dbReference type="ChEBI" id="CHEBI:17996"/>
    </reaction>
</comment>
<comment type="catalytic activity">
    <reaction evidence="3">
        <text>K(+)(in) = K(+)(out)</text>
        <dbReference type="Rhea" id="RHEA:29463"/>
        <dbReference type="ChEBI" id="CHEBI:29103"/>
    </reaction>
</comment>
<comment type="catalytic activity">
    <reaction evidence="2">
        <text>a 1,2-diacyl-sn-glycero-3-phospho-L-serine(in) = a 1,2-diacyl-sn-glycero-3-phospho-L-serine(out)</text>
        <dbReference type="Rhea" id="RHEA:38663"/>
        <dbReference type="ChEBI" id="CHEBI:57262"/>
    </reaction>
</comment>
<comment type="catalytic activity">
    <reaction evidence="2">
        <text>a 1,2-diacyl-sn-glycero-3-phosphocholine(in) = a 1,2-diacyl-sn-glycero-3-phosphocholine(out)</text>
        <dbReference type="Rhea" id="RHEA:38571"/>
        <dbReference type="ChEBI" id="CHEBI:57643"/>
    </reaction>
</comment>
<comment type="catalytic activity">
    <reaction evidence="2">
        <text>a 1,2-diacyl-sn-glycero-3-phospho-(1D-myo-inositol)(in) = a 1,2-diacyl-sn-glycero-3-phospho-(1D-myo-inositol)(out)</text>
        <dbReference type="Rhea" id="RHEA:38691"/>
        <dbReference type="ChEBI" id="CHEBI:57880"/>
    </reaction>
</comment>
<comment type="subunit">
    <text evidence="2 3">Monomer, homodimer and higher order oligomers; formation of higher order structures is necessary for scramblase activity (By similarity). Interacts with ARMC12 in a TBC1D21-dependent manner (By similarity). Interacts with KLC3 (By similarity). Interacts with SPATA33 (By similarity). Interacts with PPP3CC in a SPATA33-dependent manner (By similarity).</text>
</comment>
<comment type="subcellular location">
    <subcellularLocation>
        <location evidence="2">Mitochondrion outer membrane</location>
    </subcellularLocation>
    <subcellularLocation>
        <location evidence="2">Membrane</location>
    </subcellularLocation>
    <text evidence="2">May localize to non-mitochondrial membranes.</text>
</comment>
<comment type="tissue specificity">
    <text evidence="5 7">Highly expressed in heart, kidney, brain and ascitic tumor with very low levels in liver (PubMed:10998068). Expressed in the head region of epididymal sperm (PubMed:19423663).</text>
</comment>
<comment type="domain">
    <text evidence="1">Consists mainly of a membrane-spanning beta-barrel formed by 19 beta-strands.</text>
</comment>
<comment type="PTM">
    <text evidence="2">Ubiquitinated by PRKN during mitophagy, leading to its degradation and enhancement of mitophagy. Deubiquitinated by USP30.</text>
</comment>
<comment type="similarity">
    <text evidence="8">Belongs to the eukaryotic mitochondrial porin family.</text>
</comment>
<gene>
    <name evidence="9" type="primary">Vdac2</name>
</gene>
<proteinExistence type="evidence at protein level"/>
<reference key="1">
    <citation type="journal article" date="1992" name="J. Biol. Chem.">
        <title>Isolation and cloning of a voltage-dependent anion channel-like Mr 36,000 polypeptide from mammalian brain.</title>
        <authorList>
            <person name="Bureau M.H."/>
            <person name="Khrestchatisky M."/>
            <person name="Heeren M.A."/>
            <person name="Zambrowicz E.B."/>
            <person name="Kim H."/>
            <person name="Grisar T.M."/>
            <person name="Colombini M."/>
            <person name="Tobin A.J."/>
            <person name="Olsen R.W."/>
        </authorList>
    </citation>
    <scope>NUCLEOTIDE SEQUENCE [MRNA]</scope>
    <scope>PROTEIN SEQUENCE OF 63-96 AND 190-203</scope>
    <source>
        <tissue>Hippocampus</tissue>
    </source>
</reference>
<reference key="2">
    <citation type="journal article" date="2000" name="Eur. J. Biochem.">
        <title>Characterization of porin isoforms expressed in tumor cells.</title>
        <authorList>
            <person name="Shinohara Y."/>
            <person name="Ishida T."/>
            <person name="Hino M."/>
            <person name="Yamazaki N."/>
            <person name="Baba Y."/>
            <person name="Terada H."/>
        </authorList>
    </citation>
    <scope>NUCLEOTIDE SEQUENCE [MRNA]</scope>
    <scope>TISSUE SPECIFICITY</scope>
    <source>
        <tissue>Ascitic tumor</tissue>
    </source>
</reference>
<reference key="3">
    <citation type="submission" date="2000-05" db="EMBL/GenBank/DDBJ databases">
        <title>Ion channels in the lens.</title>
        <authorList>
            <person name="Rae J.L."/>
        </authorList>
    </citation>
    <scope>NUCLEOTIDE SEQUENCE [MRNA]</scope>
    <source>
        <strain>Sprague-Dawley</strain>
        <tissue>Lens</tissue>
    </source>
</reference>
<reference key="4">
    <citation type="journal article" date="2004" name="Genome Res.">
        <title>The status, quality, and expansion of the NIH full-length cDNA project: the Mammalian Gene Collection (MGC).</title>
        <authorList>
            <consortium name="The MGC Project Team"/>
        </authorList>
    </citation>
    <scope>NUCLEOTIDE SEQUENCE [LARGE SCALE MRNA]</scope>
    <source>
        <tissue>Pituitary</tissue>
    </source>
</reference>
<reference key="5">
    <citation type="submission" date="2007-09" db="UniProtKB">
        <authorList>
            <person name="Lubec G."/>
            <person name="Afjehi-Sadat L."/>
            <person name="Chen W.-Q."/>
            <person name="Kang S.U."/>
            <person name="Lubec S."/>
        </authorList>
    </citation>
    <scope>PROTEIN SEQUENCE OF 47-121; 179-230 AND 237-278</scope>
    <scope>IDENTIFICATION BY MASS SPECTROMETRY</scope>
    <source>
        <strain>Sprague-Dawley</strain>
        <tissue>Brain</tissue>
        <tissue>Hippocampus</tissue>
        <tissue>Spinal cord</tissue>
    </source>
</reference>
<reference key="6">
    <citation type="journal article" date="2007" name="Biochim. Biophys. Acta">
        <title>Post-translational modifications of rat liver mitochondrial outer membrane proteins identified by mass spectrometry.</title>
        <authorList>
            <person name="Distler A.M."/>
            <person name="Kerner J."/>
            <person name="Hoppel C.L."/>
        </authorList>
    </citation>
    <scope>PROTEIN SEQUENCE OF 236-243</scope>
    <scope>PHOSPHORYLATION AT TYR-237</scope>
    <scope>IDENTIFICATION BY MASS SPECTROMETRY</scope>
    <source>
        <tissue>Liver</tissue>
    </source>
</reference>
<reference key="7">
    <citation type="journal article" date="2009" name="Reproduction">
        <title>Identification of novel immunodominant epididymal sperm proteins using combinatorial approach.</title>
        <authorList>
            <person name="Khan S.A."/>
            <person name="Suryawanshi A.R."/>
            <person name="Ranpura S.A."/>
            <person name="Jadhav S.V."/>
            <person name="Khole V.V."/>
        </authorList>
    </citation>
    <scope>IDENTIFICATION BY MASS SPECTROMETRY</scope>
    <scope>TISSUE SPECIFICITY</scope>
</reference>
<reference key="8">
    <citation type="journal article" date="2012" name="Nat. Commun.">
        <title>Quantitative maps of protein phosphorylation sites across 14 different rat organs and tissues.</title>
        <authorList>
            <person name="Lundby A."/>
            <person name="Secher A."/>
            <person name="Lage K."/>
            <person name="Nordsborg N.B."/>
            <person name="Dmytriyev A."/>
            <person name="Lundby C."/>
            <person name="Olsen J.V."/>
        </authorList>
    </citation>
    <scope>IDENTIFICATION BY MASS SPECTROMETRY [LARGE SCALE ANALYSIS]</scope>
</reference>
<feature type="chain" id="PRO_0000050509" description="Non-selective voltage-gated ion channel VDAC2">
    <location>
        <begin position="1"/>
        <end position="295"/>
    </location>
</feature>
<feature type="transmembrane region" description="Beta stranded" evidence="1">
    <location>
        <begin position="38"/>
        <end position="47"/>
    </location>
</feature>
<feature type="transmembrane region" description="Beta stranded" evidence="1">
    <location>
        <begin position="51"/>
        <end position="59"/>
    </location>
</feature>
<feature type="transmembrane region" description="Beta stranded" evidence="1">
    <location>
        <begin position="66"/>
        <end position="76"/>
    </location>
</feature>
<feature type="transmembrane region" description="Beta stranded" evidence="1">
    <location>
        <begin position="81"/>
        <end position="88"/>
    </location>
</feature>
<feature type="transmembrane region" description="Beta stranded" evidence="1">
    <location>
        <begin position="92"/>
        <end position="101"/>
    </location>
</feature>
<feature type="transmembrane region" description="Beta stranded" evidence="1">
    <location>
        <begin position="107"/>
        <end position="116"/>
    </location>
</feature>
<feature type="transmembrane region" description="Beta stranded" evidence="1">
    <location>
        <begin position="123"/>
        <end position="132"/>
    </location>
</feature>
<feature type="transmembrane region" description="Beta stranded" evidence="1">
    <location>
        <begin position="135"/>
        <end position="142"/>
    </location>
</feature>
<feature type="transmembrane region" description="Beta stranded" evidence="1">
    <location>
        <begin position="149"/>
        <end position="157"/>
    </location>
</feature>
<feature type="transmembrane region" description="Beta stranded" evidence="1">
    <location>
        <begin position="162"/>
        <end position="170"/>
    </location>
</feature>
<feature type="transmembrane region" description="Beta stranded" evidence="1">
    <location>
        <begin position="175"/>
        <end position="187"/>
    </location>
</feature>
<feature type="transmembrane region" description="Beta stranded" evidence="1">
    <location>
        <begin position="190"/>
        <end position="197"/>
    </location>
</feature>
<feature type="transmembrane region" description="Beta stranded" evidence="1">
    <location>
        <begin position="201"/>
        <end position="210"/>
    </location>
</feature>
<feature type="transmembrane region" description="Beta stranded" evidence="1">
    <location>
        <begin position="214"/>
        <end position="223"/>
    </location>
</feature>
<feature type="transmembrane region" description="Beta stranded" evidence="1">
    <location>
        <begin position="230"/>
        <end position="239"/>
    </location>
</feature>
<feature type="transmembrane region" description="Beta stranded" evidence="1">
    <location>
        <begin position="243"/>
        <end position="250"/>
    </location>
</feature>
<feature type="transmembrane region" description="Beta stranded" evidence="1">
    <location>
        <begin position="254"/>
        <end position="263"/>
    </location>
</feature>
<feature type="transmembrane region" description="Beta stranded" evidence="1">
    <location>
        <begin position="266"/>
        <end position="275"/>
    </location>
</feature>
<feature type="transmembrane region" description="Beta stranded" evidence="1">
    <location>
        <begin position="285"/>
        <end position="294"/>
    </location>
</feature>
<feature type="binding site" evidence="4">
    <location>
        <position position="24"/>
    </location>
    <ligand>
        <name>ATP</name>
        <dbReference type="ChEBI" id="CHEBI:30616"/>
    </ligand>
</feature>
<feature type="binding site" evidence="4">
    <location>
        <position position="32"/>
    </location>
    <ligand>
        <name>ATP</name>
        <dbReference type="ChEBI" id="CHEBI:30616"/>
    </ligand>
</feature>
<feature type="binding site" evidence="1">
    <location>
        <begin position="254"/>
        <end position="256"/>
    </location>
    <ligand>
        <name>NAD(+)</name>
        <dbReference type="ChEBI" id="CHEBI:57540"/>
    </ligand>
</feature>
<feature type="binding site" evidence="1">
    <location>
        <begin position="272"/>
        <end position="276"/>
    </location>
    <ligand>
        <name>NAD(+)</name>
        <dbReference type="ChEBI" id="CHEBI:57540"/>
    </ligand>
</feature>
<feature type="site" description="Involved in ceramide and phosphatidylcholine binding" evidence="2">
    <location>
        <position position="85"/>
    </location>
</feature>
<feature type="modified residue" description="N6-acetyllysine; alternate" evidence="2">
    <location>
        <position position="32"/>
    </location>
</feature>
<feature type="modified residue" description="N6-succinyllysine; alternate" evidence="3">
    <location>
        <position position="32"/>
    </location>
</feature>
<feature type="modified residue" description="Phosphotyrosine" evidence="4">
    <location>
        <position position="79"/>
    </location>
</feature>
<feature type="modified residue" description="Phosphothreonine" evidence="1">
    <location>
        <position position="119"/>
    </location>
</feature>
<feature type="modified residue" description="N6-acetyllysine; alternate" evidence="3">
    <location>
        <position position="121"/>
    </location>
</feature>
<feature type="modified residue" description="Phosphotyrosine" evidence="6">
    <location>
        <position position="237"/>
    </location>
</feature>
<feature type="modified residue" description="Phosphoserine" evidence="1">
    <location>
        <position position="252"/>
    </location>
</feature>
<feature type="modified residue" description="N6-acetyllysine; alternate" evidence="1">
    <location>
        <position position="278"/>
    </location>
</feature>
<feature type="cross-link" description="Glycyl lysine isopeptide (Lys-Gly) (interchain with G-Cter in ubiquitin); alternate" evidence="2">
    <location>
        <position position="32"/>
    </location>
</feature>
<feature type="cross-link" description="Glycyl lysine isopeptide (Lys-Gly) (interchain with G-Cter in ubiquitin)" evidence="2">
    <location>
        <position position="65"/>
    </location>
</feature>
<feature type="cross-link" description="Glycyl lysine isopeptide (Lys-Gly) (interchain with G-Cter in ubiquitin); alternate" evidence="2">
    <location>
        <position position="121"/>
    </location>
</feature>
<feature type="cross-link" description="Glycyl lysine isopeptide (Lys-Gly) (interchain with G-Cter in ubiquitin)" evidence="2">
    <location>
        <position position="122"/>
    </location>
</feature>
<feature type="cross-link" description="Glycyl lysine isopeptide (Lys-Gly) (interchain with G-Cter in ubiquitin)" evidence="1">
    <location>
        <position position="173"/>
    </location>
</feature>
<feature type="cross-link" description="Glycyl lysine isopeptide (Lys-Gly) (interchain with G-Cter in ubiquitin); alternate" evidence="2">
    <location>
        <position position="278"/>
    </location>
</feature>
<feature type="sequence conflict" description="In Ref. 1; AA sequence." evidence="8" ref="1">
    <original>P</original>
    <variation>A</variation>
    <location>
        <position position="12"/>
    </location>
</feature>